<gene>
    <name evidence="1" type="primary">miaB</name>
    <name type="ordered locus">XC_1788</name>
</gene>
<comment type="function">
    <text evidence="1">Catalyzes the methylthiolation of N6-(dimethylallyl)adenosine (i(6)A), leading to the formation of 2-methylthio-N6-(dimethylallyl)adenosine (ms(2)i(6)A) at position 37 in tRNAs that read codons beginning with uridine.</text>
</comment>
<comment type="catalytic activity">
    <reaction evidence="1">
        <text>N(6)-dimethylallyladenosine(37) in tRNA + (sulfur carrier)-SH + AH2 + 2 S-adenosyl-L-methionine = 2-methylsulfanyl-N(6)-dimethylallyladenosine(37) in tRNA + (sulfur carrier)-H + 5'-deoxyadenosine + L-methionine + A + S-adenosyl-L-homocysteine + 2 H(+)</text>
        <dbReference type="Rhea" id="RHEA:37067"/>
        <dbReference type="Rhea" id="RHEA-COMP:10375"/>
        <dbReference type="Rhea" id="RHEA-COMP:10376"/>
        <dbReference type="Rhea" id="RHEA-COMP:14737"/>
        <dbReference type="Rhea" id="RHEA-COMP:14739"/>
        <dbReference type="ChEBI" id="CHEBI:13193"/>
        <dbReference type="ChEBI" id="CHEBI:15378"/>
        <dbReference type="ChEBI" id="CHEBI:17319"/>
        <dbReference type="ChEBI" id="CHEBI:17499"/>
        <dbReference type="ChEBI" id="CHEBI:29917"/>
        <dbReference type="ChEBI" id="CHEBI:57844"/>
        <dbReference type="ChEBI" id="CHEBI:57856"/>
        <dbReference type="ChEBI" id="CHEBI:59789"/>
        <dbReference type="ChEBI" id="CHEBI:64428"/>
        <dbReference type="ChEBI" id="CHEBI:74415"/>
        <dbReference type="ChEBI" id="CHEBI:74417"/>
        <dbReference type="EC" id="2.8.4.3"/>
    </reaction>
</comment>
<comment type="cofactor">
    <cofactor evidence="1">
        <name>[4Fe-4S] cluster</name>
        <dbReference type="ChEBI" id="CHEBI:49883"/>
    </cofactor>
    <text evidence="1">Binds 2 [4Fe-4S] clusters. One cluster is coordinated with 3 cysteines and an exchangeable S-adenosyl-L-methionine.</text>
</comment>
<comment type="subunit">
    <text evidence="1">Monomer.</text>
</comment>
<comment type="subcellular location">
    <subcellularLocation>
        <location evidence="1">Cytoplasm</location>
    </subcellularLocation>
</comment>
<comment type="similarity">
    <text evidence="1">Belongs to the methylthiotransferase family. MiaB subfamily.</text>
</comment>
<organism>
    <name type="scientific">Xanthomonas campestris pv. campestris (strain 8004)</name>
    <dbReference type="NCBI Taxonomy" id="314565"/>
    <lineage>
        <taxon>Bacteria</taxon>
        <taxon>Pseudomonadati</taxon>
        <taxon>Pseudomonadota</taxon>
        <taxon>Gammaproteobacteria</taxon>
        <taxon>Lysobacterales</taxon>
        <taxon>Lysobacteraceae</taxon>
        <taxon>Xanthomonas</taxon>
    </lineage>
</organism>
<feature type="chain" id="PRO_0000374644" description="tRNA-2-methylthio-N(6)-dimethylallyladenosine synthase">
    <location>
        <begin position="1"/>
        <end position="485"/>
    </location>
</feature>
<feature type="domain" description="MTTase N-terminal" evidence="1">
    <location>
        <begin position="37"/>
        <end position="154"/>
    </location>
</feature>
<feature type="domain" description="Radical SAM core" evidence="2">
    <location>
        <begin position="177"/>
        <end position="416"/>
    </location>
</feature>
<feature type="domain" description="TRAM" evidence="1">
    <location>
        <begin position="417"/>
        <end position="480"/>
    </location>
</feature>
<feature type="binding site" evidence="1">
    <location>
        <position position="46"/>
    </location>
    <ligand>
        <name>[4Fe-4S] cluster</name>
        <dbReference type="ChEBI" id="CHEBI:49883"/>
        <label>1</label>
    </ligand>
</feature>
<feature type="binding site" evidence="1">
    <location>
        <position position="83"/>
    </location>
    <ligand>
        <name>[4Fe-4S] cluster</name>
        <dbReference type="ChEBI" id="CHEBI:49883"/>
        <label>1</label>
    </ligand>
</feature>
<feature type="binding site" evidence="1">
    <location>
        <position position="117"/>
    </location>
    <ligand>
        <name>[4Fe-4S] cluster</name>
        <dbReference type="ChEBI" id="CHEBI:49883"/>
        <label>1</label>
    </ligand>
</feature>
<feature type="binding site" evidence="1">
    <location>
        <position position="191"/>
    </location>
    <ligand>
        <name>[4Fe-4S] cluster</name>
        <dbReference type="ChEBI" id="CHEBI:49883"/>
        <label>2</label>
        <note>4Fe-4S-S-AdoMet</note>
    </ligand>
</feature>
<feature type="binding site" evidence="1">
    <location>
        <position position="195"/>
    </location>
    <ligand>
        <name>[4Fe-4S] cluster</name>
        <dbReference type="ChEBI" id="CHEBI:49883"/>
        <label>2</label>
        <note>4Fe-4S-S-AdoMet</note>
    </ligand>
</feature>
<feature type="binding site" evidence="1">
    <location>
        <position position="198"/>
    </location>
    <ligand>
        <name>[4Fe-4S] cluster</name>
        <dbReference type="ChEBI" id="CHEBI:49883"/>
        <label>2</label>
        <note>4Fe-4S-S-AdoMet</note>
    </ligand>
</feature>
<proteinExistence type="inferred from homology"/>
<keyword id="KW-0004">4Fe-4S</keyword>
<keyword id="KW-0963">Cytoplasm</keyword>
<keyword id="KW-0408">Iron</keyword>
<keyword id="KW-0411">Iron-sulfur</keyword>
<keyword id="KW-0479">Metal-binding</keyword>
<keyword id="KW-0949">S-adenosyl-L-methionine</keyword>
<keyword id="KW-0808">Transferase</keyword>
<keyword id="KW-0819">tRNA processing</keyword>
<reference key="1">
    <citation type="journal article" date="2005" name="Genome Res.">
        <title>Comparative and functional genomic analyses of the pathogenicity of phytopathogen Xanthomonas campestris pv. campestris.</title>
        <authorList>
            <person name="Qian W."/>
            <person name="Jia Y."/>
            <person name="Ren S.-X."/>
            <person name="He Y.-Q."/>
            <person name="Feng J.-X."/>
            <person name="Lu L.-F."/>
            <person name="Sun Q."/>
            <person name="Ying G."/>
            <person name="Tang D.-J."/>
            <person name="Tang H."/>
            <person name="Wu W."/>
            <person name="Hao P."/>
            <person name="Wang L."/>
            <person name="Jiang B.-L."/>
            <person name="Zeng S."/>
            <person name="Gu W.-Y."/>
            <person name="Lu G."/>
            <person name="Rong L."/>
            <person name="Tian Y."/>
            <person name="Yao Z."/>
            <person name="Fu G."/>
            <person name="Chen B."/>
            <person name="Fang R."/>
            <person name="Qiang B."/>
            <person name="Chen Z."/>
            <person name="Zhao G.-P."/>
            <person name="Tang J.-L."/>
            <person name="He C."/>
        </authorList>
    </citation>
    <scope>NUCLEOTIDE SEQUENCE [LARGE SCALE GENOMIC DNA]</scope>
    <source>
        <strain>8004</strain>
    </source>
</reference>
<protein>
    <recommendedName>
        <fullName evidence="1">tRNA-2-methylthio-N(6)-dimethylallyladenosine synthase</fullName>
        <ecNumber evidence="1">2.8.4.3</ecNumber>
    </recommendedName>
    <alternativeName>
        <fullName evidence="1">(Dimethylallyl)adenosine tRNA methylthiotransferase MiaB</fullName>
    </alternativeName>
    <alternativeName>
        <fullName evidence="1">tRNA-i(6)A37 methylthiotransferase</fullName>
    </alternativeName>
</protein>
<sequence>MPGTSVSDLPTTATAVDAPALLPLPVGRPQAPALVRGKLYIKTHGCQMNEYDSAKMADVLAASEGLELTDNPEDADVVLVNTCSIREKAQEKVFSQLGRWKALKAGGKPVIIGVGGCVASQEGEAIVKRAPYVDLVFGPQTLHRLPELIRARRESGKSQVDISFPEIEKFDRLPEPRADGPSAFVSIMEGCSKYCSFCVVPYTRGEEVSRPFEDVLVEVAQLAAQGVREINLLGQNVNAYRGAYGADAGEPAQYADLGLLIRTIAQIDGIGRIRFTTSHPLEFSDSLVDAYRDVPQLANYLHLPVQAGSDRILSAMKRGYTALEFKSKIRKLRAVRPDISISSDFIVGFPGETDADFDKTMKLIEDVGFDQSFSFIYSRRPGTPASDLEDDTPDAVKQARLARLQAHINAHAAGISQRMVGSVQRVLVEGPSRRDANELTGKTENMRPVNFPGNPRLVGQFVDVLITEALSNSLRGRIQLDDSAA</sequence>
<name>MIAB_XANC8</name>
<evidence type="ECO:0000255" key="1">
    <source>
        <dbReference type="HAMAP-Rule" id="MF_01864"/>
    </source>
</evidence>
<evidence type="ECO:0000255" key="2">
    <source>
        <dbReference type="PROSITE-ProRule" id="PRU01266"/>
    </source>
</evidence>
<accession>Q4UVS2</accession>
<dbReference type="EC" id="2.8.4.3" evidence="1"/>
<dbReference type="EMBL" id="CP000050">
    <property type="protein sequence ID" value="AAY48851.1"/>
    <property type="molecule type" value="Genomic_DNA"/>
</dbReference>
<dbReference type="RefSeq" id="WP_011037471.1">
    <property type="nucleotide sequence ID" value="NZ_CP155948.1"/>
</dbReference>
<dbReference type="SMR" id="Q4UVS2"/>
<dbReference type="KEGG" id="xcb:XC_1788"/>
<dbReference type="HOGENOM" id="CLU_018697_2_2_6"/>
<dbReference type="Proteomes" id="UP000000420">
    <property type="component" value="Chromosome"/>
</dbReference>
<dbReference type="GO" id="GO:0005829">
    <property type="term" value="C:cytosol"/>
    <property type="evidence" value="ECO:0007669"/>
    <property type="project" value="TreeGrafter"/>
</dbReference>
<dbReference type="GO" id="GO:0051539">
    <property type="term" value="F:4 iron, 4 sulfur cluster binding"/>
    <property type="evidence" value="ECO:0007669"/>
    <property type="project" value="UniProtKB-UniRule"/>
</dbReference>
<dbReference type="GO" id="GO:0046872">
    <property type="term" value="F:metal ion binding"/>
    <property type="evidence" value="ECO:0007669"/>
    <property type="project" value="UniProtKB-KW"/>
</dbReference>
<dbReference type="GO" id="GO:0035597">
    <property type="term" value="F:N6-isopentenyladenosine methylthiotransferase activity"/>
    <property type="evidence" value="ECO:0007669"/>
    <property type="project" value="TreeGrafter"/>
</dbReference>
<dbReference type="CDD" id="cd01335">
    <property type="entry name" value="Radical_SAM"/>
    <property type="match status" value="1"/>
</dbReference>
<dbReference type="FunFam" id="3.40.50.12160:FF:000001">
    <property type="entry name" value="tRNA-2-methylthio-N(6)-dimethylallyladenosine synthase"/>
    <property type="match status" value="1"/>
</dbReference>
<dbReference type="FunFam" id="3.80.30.20:FF:000001">
    <property type="entry name" value="tRNA-2-methylthio-N(6)-dimethylallyladenosine synthase 2"/>
    <property type="match status" value="1"/>
</dbReference>
<dbReference type="Gene3D" id="3.40.50.12160">
    <property type="entry name" value="Methylthiotransferase, N-terminal domain"/>
    <property type="match status" value="1"/>
</dbReference>
<dbReference type="Gene3D" id="3.80.30.20">
    <property type="entry name" value="tm_1862 like domain"/>
    <property type="match status" value="1"/>
</dbReference>
<dbReference type="HAMAP" id="MF_01864">
    <property type="entry name" value="tRNA_metthiotr_MiaB"/>
    <property type="match status" value="1"/>
</dbReference>
<dbReference type="InterPro" id="IPR006638">
    <property type="entry name" value="Elp3/MiaA/NifB-like_rSAM"/>
</dbReference>
<dbReference type="InterPro" id="IPR005839">
    <property type="entry name" value="Methylthiotransferase"/>
</dbReference>
<dbReference type="InterPro" id="IPR020612">
    <property type="entry name" value="Methylthiotransferase_CS"/>
</dbReference>
<dbReference type="InterPro" id="IPR013848">
    <property type="entry name" value="Methylthiotransferase_N"/>
</dbReference>
<dbReference type="InterPro" id="IPR038135">
    <property type="entry name" value="Methylthiotransferase_N_sf"/>
</dbReference>
<dbReference type="InterPro" id="IPR006463">
    <property type="entry name" value="MiaB_methiolase"/>
</dbReference>
<dbReference type="InterPro" id="IPR007197">
    <property type="entry name" value="rSAM"/>
</dbReference>
<dbReference type="InterPro" id="IPR023404">
    <property type="entry name" value="rSAM_horseshoe"/>
</dbReference>
<dbReference type="InterPro" id="IPR002792">
    <property type="entry name" value="TRAM_dom"/>
</dbReference>
<dbReference type="NCBIfam" id="TIGR01574">
    <property type="entry name" value="miaB-methiolase"/>
    <property type="match status" value="1"/>
</dbReference>
<dbReference type="NCBIfam" id="TIGR00089">
    <property type="entry name" value="MiaB/RimO family radical SAM methylthiotransferase"/>
    <property type="match status" value="1"/>
</dbReference>
<dbReference type="PANTHER" id="PTHR43020">
    <property type="entry name" value="CDK5 REGULATORY SUBUNIT-ASSOCIATED PROTEIN 1"/>
    <property type="match status" value="1"/>
</dbReference>
<dbReference type="PANTHER" id="PTHR43020:SF2">
    <property type="entry name" value="MITOCHONDRIAL TRNA METHYLTHIOTRANSFERASE CDK5RAP1"/>
    <property type="match status" value="1"/>
</dbReference>
<dbReference type="Pfam" id="PF04055">
    <property type="entry name" value="Radical_SAM"/>
    <property type="match status" value="1"/>
</dbReference>
<dbReference type="Pfam" id="PF01938">
    <property type="entry name" value="TRAM"/>
    <property type="match status" value="1"/>
</dbReference>
<dbReference type="Pfam" id="PF00919">
    <property type="entry name" value="UPF0004"/>
    <property type="match status" value="1"/>
</dbReference>
<dbReference type="SFLD" id="SFLDF00273">
    <property type="entry name" value="(dimethylallyl)adenosine_tRNA"/>
    <property type="match status" value="1"/>
</dbReference>
<dbReference type="SFLD" id="SFLDG01082">
    <property type="entry name" value="B12-binding_domain_containing"/>
    <property type="match status" value="1"/>
</dbReference>
<dbReference type="SFLD" id="SFLDG01061">
    <property type="entry name" value="methylthiotransferase"/>
    <property type="match status" value="1"/>
</dbReference>
<dbReference type="SMART" id="SM00729">
    <property type="entry name" value="Elp3"/>
    <property type="match status" value="1"/>
</dbReference>
<dbReference type="SUPFAM" id="SSF102114">
    <property type="entry name" value="Radical SAM enzymes"/>
    <property type="match status" value="1"/>
</dbReference>
<dbReference type="PROSITE" id="PS51449">
    <property type="entry name" value="MTTASE_N"/>
    <property type="match status" value="1"/>
</dbReference>
<dbReference type="PROSITE" id="PS01278">
    <property type="entry name" value="MTTASE_RADICAL"/>
    <property type="match status" value="1"/>
</dbReference>
<dbReference type="PROSITE" id="PS51918">
    <property type="entry name" value="RADICAL_SAM"/>
    <property type="match status" value="1"/>
</dbReference>
<dbReference type="PROSITE" id="PS50926">
    <property type="entry name" value="TRAM"/>
    <property type="match status" value="1"/>
</dbReference>